<sequence length="398" mass="45370">MYTDKGANSDRMEFNTSKEVTVAPTFEDMHLKESLLRGIYAYGYESPSAVQSRAIVQICKGRDTIAQAQSGTGKTATFSISILQVIDTVVRESQALVLSPTRELATQIQSVIMALGDYMNVQCHACIGGTNIGEDIRKLDYGQHVVSGTPGRVADMIRRRHLRTRHIKMLVLDEADELLNRGFREQIYDVYRYLPPATQVVVVSATLPYDVLDMTTKFMTDPVRVLVKRDELTLEGIKQYFIAVEKEEWKFDTLCDLYDTLTITQAVIFCNTRRKVDWLTDKMREANFTVSSMHGEMPQKERDSIMQDFRQGNSRVLISTDVWARGIDVQQVSLVINYDLPTNRENYIHRIGRSGRFGRKGVAINFVTSDDVRILRDIELYYSTQIDEMPMNVADLLS</sequence>
<organism>
    <name type="scientific">Aspergillus oryzae (strain ATCC 42149 / RIB 40)</name>
    <name type="common">Yellow koji mold</name>
    <dbReference type="NCBI Taxonomy" id="510516"/>
    <lineage>
        <taxon>Eukaryota</taxon>
        <taxon>Fungi</taxon>
        <taxon>Dikarya</taxon>
        <taxon>Ascomycota</taxon>
        <taxon>Pezizomycotina</taxon>
        <taxon>Eurotiomycetes</taxon>
        <taxon>Eurotiomycetidae</taxon>
        <taxon>Eurotiales</taxon>
        <taxon>Aspergillaceae</taxon>
        <taxon>Aspergillus</taxon>
        <taxon>Aspergillus subgen. Circumdati</taxon>
    </lineage>
</organism>
<evidence type="ECO:0000250" key="1"/>
<evidence type="ECO:0000255" key="2">
    <source>
        <dbReference type="PROSITE-ProRule" id="PRU00541"/>
    </source>
</evidence>
<evidence type="ECO:0000255" key="3">
    <source>
        <dbReference type="PROSITE-ProRule" id="PRU00542"/>
    </source>
</evidence>
<evidence type="ECO:0000305" key="4"/>
<keyword id="KW-0067">ATP-binding</keyword>
<keyword id="KW-0347">Helicase</keyword>
<keyword id="KW-0378">Hydrolase</keyword>
<keyword id="KW-0547">Nucleotide-binding</keyword>
<keyword id="KW-0539">Nucleus</keyword>
<keyword id="KW-1185">Reference proteome</keyword>
<keyword id="KW-0690">Ribosome biogenesis</keyword>
<keyword id="KW-0694">RNA-binding</keyword>
<keyword id="KW-0698">rRNA processing</keyword>
<dbReference type="EC" id="3.6.4.13"/>
<dbReference type="EMBL" id="BA000052">
    <property type="protein sequence ID" value="BAE61414.1"/>
    <property type="molecule type" value="Genomic_DNA"/>
</dbReference>
<dbReference type="SMR" id="Q2UAK1"/>
<dbReference type="STRING" id="510516.Q2UAK1"/>
<dbReference type="EnsemblFungi" id="BAE61414">
    <property type="protein sequence ID" value="BAE61414"/>
    <property type="gene ID" value="AO090102000353"/>
</dbReference>
<dbReference type="HOGENOM" id="CLU_003041_1_0_1"/>
<dbReference type="Proteomes" id="UP000006564">
    <property type="component" value="Chromosome 4"/>
</dbReference>
<dbReference type="GO" id="GO:0030874">
    <property type="term" value="C:nucleolar chromatin"/>
    <property type="evidence" value="ECO:0007669"/>
    <property type="project" value="EnsemblFungi"/>
</dbReference>
<dbReference type="GO" id="GO:0005524">
    <property type="term" value="F:ATP binding"/>
    <property type="evidence" value="ECO:0007669"/>
    <property type="project" value="UniProtKB-KW"/>
</dbReference>
<dbReference type="GO" id="GO:0016887">
    <property type="term" value="F:ATP hydrolysis activity"/>
    <property type="evidence" value="ECO:0007669"/>
    <property type="project" value="RHEA"/>
</dbReference>
<dbReference type="GO" id="GO:0003723">
    <property type="term" value="F:RNA binding"/>
    <property type="evidence" value="ECO:0007669"/>
    <property type="project" value="UniProtKB-KW"/>
</dbReference>
<dbReference type="GO" id="GO:0003724">
    <property type="term" value="F:RNA helicase activity"/>
    <property type="evidence" value="ECO:0007669"/>
    <property type="project" value="UniProtKB-EC"/>
</dbReference>
<dbReference type="GO" id="GO:0006364">
    <property type="term" value="P:rRNA processing"/>
    <property type="evidence" value="ECO:0007669"/>
    <property type="project" value="UniProtKB-KW"/>
</dbReference>
<dbReference type="CDD" id="cd18045">
    <property type="entry name" value="DEADc_EIF4AIII_DDX48"/>
    <property type="match status" value="1"/>
</dbReference>
<dbReference type="CDD" id="cd18787">
    <property type="entry name" value="SF2_C_DEAD"/>
    <property type="match status" value="1"/>
</dbReference>
<dbReference type="FunFam" id="3.40.50.300:FF:000031">
    <property type="entry name" value="Eukaryotic initiation factor 4A-III"/>
    <property type="match status" value="1"/>
</dbReference>
<dbReference type="FunFam" id="3.40.50.300:FF:000498">
    <property type="entry name" value="Eukaryotic initiation factor 4A-III"/>
    <property type="match status" value="1"/>
</dbReference>
<dbReference type="Gene3D" id="3.40.50.300">
    <property type="entry name" value="P-loop containing nucleotide triphosphate hydrolases"/>
    <property type="match status" value="2"/>
</dbReference>
<dbReference type="InterPro" id="IPR011545">
    <property type="entry name" value="DEAD/DEAH_box_helicase_dom"/>
</dbReference>
<dbReference type="InterPro" id="IPR014001">
    <property type="entry name" value="Helicase_ATP-bd"/>
</dbReference>
<dbReference type="InterPro" id="IPR001650">
    <property type="entry name" value="Helicase_C-like"/>
</dbReference>
<dbReference type="InterPro" id="IPR027417">
    <property type="entry name" value="P-loop_NTPase"/>
</dbReference>
<dbReference type="InterPro" id="IPR000629">
    <property type="entry name" value="RNA-helicase_DEAD-box_CS"/>
</dbReference>
<dbReference type="InterPro" id="IPR014014">
    <property type="entry name" value="RNA_helicase_DEAD_Q_motif"/>
</dbReference>
<dbReference type="PANTHER" id="PTHR47958">
    <property type="entry name" value="ATP-DEPENDENT RNA HELICASE DBP3"/>
    <property type="match status" value="1"/>
</dbReference>
<dbReference type="Pfam" id="PF00270">
    <property type="entry name" value="DEAD"/>
    <property type="match status" value="1"/>
</dbReference>
<dbReference type="Pfam" id="PF00271">
    <property type="entry name" value="Helicase_C"/>
    <property type="match status" value="1"/>
</dbReference>
<dbReference type="SMART" id="SM00487">
    <property type="entry name" value="DEXDc"/>
    <property type="match status" value="1"/>
</dbReference>
<dbReference type="SMART" id="SM00490">
    <property type="entry name" value="HELICc"/>
    <property type="match status" value="1"/>
</dbReference>
<dbReference type="SUPFAM" id="SSF52540">
    <property type="entry name" value="P-loop containing nucleoside triphosphate hydrolases"/>
    <property type="match status" value="1"/>
</dbReference>
<dbReference type="PROSITE" id="PS00039">
    <property type="entry name" value="DEAD_ATP_HELICASE"/>
    <property type="match status" value="1"/>
</dbReference>
<dbReference type="PROSITE" id="PS51192">
    <property type="entry name" value="HELICASE_ATP_BIND_1"/>
    <property type="match status" value="1"/>
</dbReference>
<dbReference type="PROSITE" id="PS51194">
    <property type="entry name" value="HELICASE_CTER"/>
    <property type="match status" value="1"/>
</dbReference>
<dbReference type="PROSITE" id="PS51195">
    <property type="entry name" value="Q_MOTIF"/>
    <property type="match status" value="1"/>
</dbReference>
<name>FAL1_ASPOR</name>
<feature type="chain" id="PRO_0000232142" description="ATP-dependent RNA helicase fal1">
    <location>
        <begin position="1"/>
        <end position="398"/>
    </location>
</feature>
<feature type="domain" description="Helicase ATP-binding" evidence="2">
    <location>
        <begin position="55"/>
        <end position="225"/>
    </location>
</feature>
<feature type="domain" description="Helicase C-terminal" evidence="3">
    <location>
        <begin position="236"/>
        <end position="397"/>
    </location>
</feature>
<feature type="short sequence motif" description="Q motif">
    <location>
        <begin position="24"/>
        <end position="52"/>
    </location>
</feature>
<feature type="short sequence motif" description="DEAD box">
    <location>
        <begin position="173"/>
        <end position="176"/>
    </location>
</feature>
<feature type="binding site" evidence="2">
    <location>
        <begin position="68"/>
        <end position="75"/>
    </location>
    <ligand>
        <name>ATP</name>
        <dbReference type="ChEBI" id="CHEBI:30616"/>
    </ligand>
</feature>
<protein>
    <recommendedName>
        <fullName>ATP-dependent RNA helicase fal1</fullName>
        <ecNumber>3.6.4.13</ecNumber>
    </recommendedName>
</protein>
<comment type="function">
    <text evidence="1">ATP-dependent RNA helicase involved in 40S ribosomal subunit biogenesis. Required for the processing and cleavage of 35S pre-rRNA at sites A0, A1, and A2, leading to mature 18S rRNA (By similarity).</text>
</comment>
<comment type="catalytic activity">
    <reaction>
        <text>ATP + H2O = ADP + phosphate + H(+)</text>
        <dbReference type="Rhea" id="RHEA:13065"/>
        <dbReference type="ChEBI" id="CHEBI:15377"/>
        <dbReference type="ChEBI" id="CHEBI:15378"/>
        <dbReference type="ChEBI" id="CHEBI:30616"/>
        <dbReference type="ChEBI" id="CHEBI:43474"/>
        <dbReference type="ChEBI" id="CHEBI:456216"/>
        <dbReference type="EC" id="3.6.4.13"/>
    </reaction>
</comment>
<comment type="subcellular location">
    <subcellularLocation>
        <location evidence="1">Nucleus</location>
        <location evidence="1">Nucleolus</location>
    </subcellularLocation>
</comment>
<comment type="domain">
    <text>The Q motif is unique to and characteristic of the DEAD box family of RNA helicases and controls ATP binding and hydrolysis.</text>
</comment>
<comment type="similarity">
    <text evidence="4">Belongs to the DEAD box helicase family. DDX48/FAL1 subfamily.</text>
</comment>
<reference key="1">
    <citation type="journal article" date="2005" name="Nature">
        <title>Genome sequencing and analysis of Aspergillus oryzae.</title>
        <authorList>
            <person name="Machida M."/>
            <person name="Asai K."/>
            <person name="Sano M."/>
            <person name="Tanaka T."/>
            <person name="Kumagai T."/>
            <person name="Terai G."/>
            <person name="Kusumoto K."/>
            <person name="Arima T."/>
            <person name="Akita O."/>
            <person name="Kashiwagi Y."/>
            <person name="Abe K."/>
            <person name="Gomi K."/>
            <person name="Horiuchi H."/>
            <person name="Kitamoto K."/>
            <person name="Kobayashi T."/>
            <person name="Takeuchi M."/>
            <person name="Denning D.W."/>
            <person name="Galagan J.E."/>
            <person name="Nierman W.C."/>
            <person name="Yu J."/>
            <person name="Archer D.B."/>
            <person name="Bennett J.W."/>
            <person name="Bhatnagar D."/>
            <person name="Cleveland T.E."/>
            <person name="Fedorova N.D."/>
            <person name="Gotoh O."/>
            <person name="Horikawa H."/>
            <person name="Hosoyama A."/>
            <person name="Ichinomiya M."/>
            <person name="Igarashi R."/>
            <person name="Iwashita K."/>
            <person name="Juvvadi P.R."/>
            <person name="Kato M."/>
            <person name="Kato Y."/>
            <person name="Kin T."/>
            <person name="Kokubun A."/>
            <person name="Maeda H."/>
            <person name="Maeyama N."/>
            <person name="Maruyama J."/>
            <person name="Nagasaki H."/>
            <person name="Nakajima T."/>
            <person name="Oda K."/>
            <person name="Okada K."/>
            <person name="Paulsen I."/>
            <person name="Sakamoto K."/>
            <person name="Sawano T."/>
            <person name="Takahashi M."/>
            <person name="Takase K."/>
            <person name="Terabayashi Y."/>
            <person name="Wortman J.R."/>
            <person name="Yamada O."/>
            <person name="Yamagata Y."/>
            <person name="Anazawa H."/>
            <person name="Hata Y."/>
            <person name="Koide Y."/>
            <person name="Komori T."/>
            <person name="Koyama Y."/>
            <person name="Minetoki T."/>
            <person name="Suharnan S."/>
            <person name="Tanaka A."/>
            <person name="Isono K."/>
            <person name="Kuhara S."/>
            <person name="Ogasawara N."/>
            <person name="Kikuchi H."/>
        </authorList>
    </citation>
    <scope>NUCLEOTIDE SEQUENCE [LARGE SCALE GENOMIC DNA]</scope>
    <source>
        <strain>ATCC 42149 / RIB 40</strain>
    </source>
</reference>
<gene>
    <name type="primary">fal1</name>
    <name type="ORF">AO090102000353</name>
</gene>
<accession>Q2UAK1</accession>
<proteinExistence type="inferred from homology"/>